<protein>
    <recommendedName>
        <fullName evidence="1">Trigger factor</fullName>
        <shortName evidence="1">TF</shortName>
        <ecNumber evidence="1">5.2.1.8</ecNumber>
    </recommendedName>
    <alternativeName>
        <fullName evidence="1">PPIase</fullName>
    </alternativeName>
</protein>
<gene>
    <name evidence="1" type="primary">tig</name>
    <name type="ordered locus">Noca_3480</name>
</gene>
<sequence>MKSAVETLSPTRAKLTVEVPFEELKPSLDAAYKQIAKQINVPGFRRGKVPPAIIDRQVGRGAVLDQAINDVVPQKYVEALQANSLQPLAQPEIEVTKFEDNQALEFTAEVDIRPEIALPDYDGVEAQVDDIELSDADVEEQVEALRERFATLIDVERPAAEGDFVVMDLVATRDGEPIEGAEVSGMSYRVGRGGMLDGLDEALVGMSAGDEKTFQSELVGGDMVGEAVDVAVTVSQVQEQELPELDDEFAQMASEFDTVEELTADVRERLGRGRRLEQAAAARDAVLEQLLDRVEVPLPEVVVTDELNARRQNVEQQLAYAGITMEKYLEDEGQTMEEFEADLERRVRDAVAAQFLLDEVAKKEEFGIDQAELSEHLVRRAQQSGQDPQEFANHMFEHNHIPELVQEILRGKALARIVEAAVVKDGSGNVVELKNLRPDGTIGEPEDEIEAETEIEIEPAAETDTEADTEQ</sequence>
<name>TIG_NOCSJ</name>
<accession>A1SME5</accession>
<reference key="1">
    <citation type="submission" date="2006-12" db="EMBL/GenBank/DDBJ databases">
        <title>Complete sequence of chromosome 1 of Nocardioides sp. JS614.</title>
        <authorList>
            <person name="Copeland A."/>
            <person name="Lucas S."/>
            <person name="Lapidus A."/>
            <person name="Barry K."/>
            <person name="Detter J.C."/>
            <person name="Glavina del Rio T."/>
            <person name="Hammon N."/>
            <person name="Israni S."/>
            <person name="Dalin E."/>
            <person name="Tice H."/>
            <person name="Pitluck S."/>
            <person name="Thompson L.S."/>
            <person name="Brettin T."/>
            <person name="Bruce D."/>
            <person name="Han C."/>
            <person name="Tapia R."/>
            <person name="Schmutz J."/>
            <person name="Larimer F."/>
            <person name="Land M."/>
            <person name="Hauser L."/>
            <person name="Kyrpides N."/>
            <person name="Kim E."/>
            <person name="Mattes T."/>
            <person name="Gossett J."/>
            <person name="Richardson P."/>
        </authorList>
    </citation>
    <scope>NUCLEOTIDE SEQUENCE [LARGE SCALE GENOMIC DNA]</scope>
    <source>
        <strain>ATCC BAA-499 / JS614</strain>
    </source>
</reference>
<proteinExistence type="inferred from homology"/>
<evidence type="ECO:0000255" key="1">
    <source>
        <dbReference type="HAMAP-Rule" id="MF_00303"/>
    </source>
</evidence>
<evidence type="ECO:0000256" key="2">
    <source>
        <dbReference type="SAM" id="MobiDB-lite"/>
    </source>
</evidence>
<comment type="function">
    <text evidence="1">Involved in protein export. Acts as a chaperone by maintaining the newly synthesized protein in an open conformation. Functions as a peptidyl-prolyl cis-trans isomerase.</text>
</comment>
<comment type="catalytic activity">
    <reaction evidence="1">
        <text>[protein]-peptidylproline (omega=180) = [protein]-peptidylproline (omega=0)</text>
        <dbReference type="Rhea" id="RHEA:16237"/>
        <dbReference type="Rhea" id="RHEA-COMP:10747"/>
        <dbReference type="Rhea" id="RHEA-COMP:10748"/>
        <dbReference type="ChEBI" id="CHEBI:83833"/>
        <dbReference type="ChEBI" id="CHEBI:83834"/>
        <dbReference type="EC" id="5.2.1.8"/>
    </reaction>
</comment>
<comment type="subcellular location">
    <subcellularLocation>
        <location>Cytoplasm</location>
    </subcellularLocation>
    <text evidence="1">About half TF is bound to the ribosome near the polypeptide exit tunnel while the other half is free in the cytoplasm.</text>
</comment>
<comment type="domain">
    <text evidence="1">Consists of 3 domains; the N-terminus binds the ribosome, the middle domain has PPIase activity, while the C-terminus has intrinsic chaperone activity on its own.</text>
</comment>
<comment type="similarity">
    <text evidence="1">Belongs to the FKBP-type PPIase family. Tig subfamily.</text>
</comment>
<feature type="chain" id="PRO_1000022721" description="Trigger factor">
    <location>
        <begin position="1"/>
        <end position="471"/>
    </location>
</feature>
<feature type="domain" description="PPIase FKBP-type" evidence="1">
    <location>
        <begin position="162"/>
        <end position="243"/>
    </location>
</feature>
<feature type="region of interest" description="Disordered" evidence="2">
    <location>
        <begin position="436"/>
        <end position="471"/>
    </location>
</feature>
<feature type="compositionally biased region" description="Acidic residues" evidence="2">
    <location>
        <begin position="444"/>
        <end position="471"/>
    </location>
</feature>
<keyword id="KW-0131">Cell cycle</keyword>
<keyword id="KW-0132">Cell division</keyword>
<keyword id="KW-0143">Chaperone</keyword>
<keyword id="KW-0963">Cytoplasm</keyword>
<keyword id="KW-0413">Isomerase</keyword>
<keyword id="KW-1185">Reference proteome</keyword>
<keyword id="KW-0697">Rotamase</keyword>
<dbReference type="EC" id="5.2.1.8" evidence="1"/>
<dbReference type="EMBL" id="CP000509">
    <property type="protein sequence ID" value="ABL82980.1"/>
    <property type="molecule type" value="Genomic_DNA"/>
</dbReference>
<dbReference type="RefSeq" id="WP_011756913.1">
    <property type="nucleotide sequence ID" value="NC_008699.1"/>
</dbReference>
<dbReference type="SMR" id="A1SME5"/>
<dbReference type="STRING" id="196162.Noca_3480"/>
<dbReference type="KEGG" id="nca:Noca_3480"/>
<dbReference type="eggNOG" id="COG0544">
    <property type="taxonomic scope" value="Bacteria"/>
</dbReference>
<dbReference type="HOGENOM" id="CLU_033058_3_0_11"/>
<dbReference type="OrthoDB" id="9767721at2"/>
<dbReference type="Proteomes" id="UP000000640">
    <property type="component" value="Chromosome"/>
</dbReference>
<dbReference type="GO" id="GO:0005737">
    <property type="term" value="C:cytoplasm"/>
    <property type="evidence" value="ECO:0007669"/>
    <property type="project" value="UniProtKB-SubCell"/>
</dbReference>
<dbReference type="GO" id="GO:0003755">
    <property type="term" value="F:peptidyl-prolyl cis-trans isomerase activity"/>
    <property type="evidence" value="ECO:0007669"/>
    <property type="project" value="UniProtKB-UniRule"/>
</dbReference>
<dbReference type="GO" id="GO:0044183">
    <property type="term" value="F:protein folding chaperone"/>
    <property type="evidence" value="ECO:0007669"/>
    <property type="project" value="TreeGrafter"/>
</dbReference>
<dbReference type="GO" id="GO:0043022">
    <property type="term" value="F:ribosome binding"/>
    <property type="evidence" value="ECO:0007669"/>
    <property type="project" value="TreeGrafter"/>
</dbReference>
<dbReference type="GO" id="GO:0051083">
    <property type="term" value="P:'de novo' cotranslational protein folding"/>
    <property type="evidence" value="ECO:0007669"/>
    <property type="project" value="TreeGrafter"/>
</dbReference>
<dbReference type="GO" id="GO:0051301">
    <property type="term" value="P:cell division"/>
    <property type="evidence" value="ECO:0007669"/>
    <property type="project" value="UniProtKB-KW"/>
</dbReference>
<dbReference type="GO" id="GO:0061077">
    <property type="term" value="P:chaperone-mediated protein folding"/>
    <property type="evidence" value="ECO:0007669"/>
    <property type="project" value="TreeGrafter"/>
</dbReference>
<dbReference type="GO" id="GO:0015031">
    <property type="term" value="P:protein transport"/>
    <property type="evidence" value="ECO:0007669"/>
    <property type="project" value="UniProtKB-UniRule"/>
</dbReference>
<dbReference type="GO" id="GO:0043335">
    <property type="term" value="P:protein unfolding"/>
    <property type="evidence" value="ECO:0007669"/>
    <property type="project" value="TreeGrafter"/>
</dbReference>
<dbReference type="Gene3D" id="3.10.50.40">
    <property type="match status" value="1"/>
</dbReference>
<dbReference type="Gene3D" id="3.30.70.1050">
    <property type="entry name" value="Trigger factor ribosome-binding domain"/>
    <property type="match status" value="1"/>
</dbReference>
<dbReference type="Gene3D" id="1.10.3120.10">
    <property type="entry name" value="Trigger factor, C-terminal domain"/>
    <property type="match status" value="1"/>
</dbReference>
<dbReference type="HAMAP" id="MF_00303">
    <property type="entry name" value="Trigger_factor_Tig"/>
    <property type="match status" value="1"/>
</dbReference>
<dbReference type="InterPro" id="IPR046357">
    <property type="entry name" value="PPIase_dom_sf"/>
</dbReference>
<dbReference type="InterPro" id="IPR001179">
    <property type="entry name" value="PPIase_FKBP_dom"/>
</dbReference>
<dbReference type="InterPro" id="IPR005215">
    <property type="entry name" value="Trig_fac"/>
</dbReference>
<dbReference type="InterPro" id="IPR008880">
    <property type="entry name" value="Trigger_fac_C"/>
</dbReference>
<dbReference type="InterPro" id="IPR037041">
    <property type="entry name" value="Trigger_fac_C_sf"/>
</dbReference>
<dbReference type="InterPro" id="IPR008881">
    <property type="entry name" value="Trigger_fac_ribosome-bd_bac"/>
</dbReference>
<dbReference type="InterPro" id="IPR036611">
    <property type="entry name" value="Trigger_fac_ribosome-bd_sf"/>
</dbReference>
<dbReference type="InterPro" id="IPR027304">
    <property type="entry name" value="Trigger_fact/SurA_dom_sf"/>
</dbReference>
<dbReference type="NCBIfam" id="TIGR00115">
    <property type="entry name" value="tig"/>
    <property type="match status" value="1"/>
</dbReference>
<dbReference type="PANTHER" id="PTHR30560">
    <property type="entry name" value="TRIGGER FACTOR CHAPERONE AND PEPTIDYL-PROLYL CIS/TRANS ISOMERASE"/>
    <property type="match status" value="1"/>
</dbReference>
<dbReference type="PANTHER" id="PTHR30560:SF3">
    <property type="entry name" value="TRIGGER FACTOR-LIKE PROTEIN TIG, CHLOROPLASTIC"/>
    <property type="match status" value="1"/>
</dbReference>
<dbReference type="Pfam" id="PF00254">
    <property type="entry name" value="FKBP_C"/>
    <property type="match status" value="1"/>
</dbReference>
<dbReference type="Pfam" id="PF05698">
    <property type="entry name" value="Trigger_C"/>
    <property type="match status" value="1"/>
</dbReference>
<dbReference type="Pfam" id="PF05697">
    <property type="entry name" value="Trigger_N"/>
    <property type="match status" value="1"/>
</dbReference>
<dbReference type="PIRSF" id="PIRSF003095">
    <property type="entry name" value="Trigger_factor"/>
    <property type="match status" value="1"/>
</dbReference>
<dbReference type="SUPFAM" id="SSF54534">
    <property type="entry name" value="FKBP-like"/>
    <property type="match status" value="1"/>
</dbReference>
<dbReference type="SUPFAM" id="SSF109998">
    <property type="entry name" value="Triger factor/SurA peptide-binding domain-like"/>
    <property type="match status" value="1"/>
</dbReference>
<dbReference type="SUPFAM" id="SSF102735">
    <property type="entry name" value="Trigger factor ribosome-binding domain"/>
    <property type="match status" value="1"/>
</dbReference>
<dbReference type="PROSITE" id="PS50059">
    <property type="entry name" value="FKBP_PPIASE"/>
    <property type="match status" value="1"/>
</dbReference>
<organism>
    <name type="scientific">Nocardioides sp. (strain ATCC BAA-499 / JS614)</name>
    <dbReference type="NCBI Taxonomy" id="196162"/>
    <lineage>
        <taxon>Bacteria</taxon>
        <taxon>Bacillati</taxon>
        <taxon>Actinomycetota</taxon>
        <taxon>Actinomycetes</taxon>
        <taxon>Propionibacteriales</taxon>
        <taxon>Nocardioidaceae</taxon>
        <taxon>Nocardioides</taxon>
    </lineage>
</organism>